<dbReference type="EC" id="2.8.1.6" evidence="1"/>
<dbReference type="EMBL" id="CP000931">
    <property type="protein sequence ID" value="ABZ77034.1"/>
    <property type="molecule type" value="Genomic_DNA"/>
</dbReference>
<dbReference type="RefSeq" id="WP_012277562.1">
    <property type="nucleotide sequence ID" value="NC_010334.1"/>
</dbReference>
<dbReference type="SMR" id="B0TJN8"/>
<dbReference type="STRING" id="458817.Shal_2477"/>
<dbReference type="KEGG" id="shl:Shal_2477"/>
<dbReference type="eggNOG" id="COG0502">
    <property type="taxonomic scope" value="Bacteria"/>
</dbReference>
<dbReference type="HOGENOM" id="CLU_033172_1_2_6"/>
<dbReference type="OrthoDB" id="9786826at2"/>
<dbReference type="UniPathway" id="UPA00078">
    <property type="reaction ID" value="UER00162"/>
</dbReference>
<dbReference type="Proteomes" id="UP000001317">
    <property type="component" value="Chromosome"/>
</dbReference>
<dbReference type="GO" id="GO:0051537">
    <property type="term" value="F:2 iron, 2 sulfur cluster binding"/>
    <property type="evidence" value="ECO:0007669"/>
    <property type="project" value="UniProtKB-KW"/>
</dbReference>
<dbReference type="GO" id="GO:0051539">
    <property type="term" value="F:4 iron, 4 sulfur cluster binding"/>
    <property type="evidence" value="ECO:0007669"/>
    <property type="project" value="UniProtKB-KW"/>
</dbReference>
<dbReference type="GO" id="GO:0004076">
    <property type="term" value="F:biotin synthase activity"/>
    <property type="evidence" value="ECO:0007669"/>
    <property type="project" value="UniProtKB-UniRule"/>
</dbReference>
<dbReference type="GO" id="GO:0005506">
    <property type="term" value="F:iron ion binding"/>
    <property type="evidence" value="ECO:0007669"/>
    <property type="project" value="UniProtKB-UniRule"/>
</dbReference>
<dbReference type="GO" id="GO:0009102">
    <property type="term" value="P:biotin biosynthetic process"/>
    <property type="evidence" value="ECO:0007669"/>
    <property type="project" value="UniProtKB-UniRule"/>
</dbReference>
<dbReference type="CDD" id="cd01335">
    <property type="entry name" value="Radical_SAM"/>
    <property type="match status" value="1"/>
</dbReference>
<dbReference type="FunFam" id="3.20.20.70:FF:000011">
    <property type="entry name" value="Biotin synthase"/>
    <property type="match status" value="1"/>
</dbReference>
<dbReference type="Gene3D" id="3.20.20.70">
    <property type="entry name" value="Aldolase class I"/>
    <property type="match status" value="1"/>
</dbReference>
<dbReference type="HAMAP" id="MF_01694">
    <property type="entry name" value="BioB"/>
    <property type="match status" value="1"/>
</dbReference>
<dbReference type="InterPro" id="IPR013785">
    <property type="entry name" value="Aldolase_TIM"/>
</dbReference>
<dbReference type="InterPro" id="IPR010722">
    <property type="entry name" value="BATS_dom"/>
</dbReference>
<dbReference type="InterPro" id="IPR002684">
    <property type="entry name" value="Biotin_synth/BioAB"/>
</dbReference>
<dbReference type="InterPro" id="IPR024177">
    <property type="entry name" value="Biotin_synthase"/>
</dbReference>
<dbReference type="InterPro" id="IPR006638">
    <property type="entry name" value="Elp3/MiaA/NifB-like_rSAM"/>
</dbReference>
<dbReference type="InterPro" id="IPR007197">
    <property type="entry name" value="rSAM"/>
</dbReference>
<dbReference type="NCBIfam" id="TIGR00433">
    <property type="entry name" value="bioB"/>
    <property type="match status" value="1"/>
</dbReference>
<dbReference type="PANTHER" id="PTHR22976">
    <property type="entry name" value="BIOTIN SYNTHASE"/>
    <property type="match status" value="1"/>
</dbReference>
<dbReference type="PANTHER" id="PTHR22976:SF2">
    <property type="entry name" value="BIOTIN SYNTHASE, MITOCHONDRIAL"/>
    <property type="match status" value="1"/>
</dbReference>
<dbReference type="Pfam" id="PF06968">
    <property type="entry name" value="BATS"/>
    <property type="match status" value="1"/>
</dbReference>
<dbReference type="Pfam" id="PF04055">
    <property type="entry name" value="Radical_SAM"/>
    <property type="match status" value="1"/>
</dbReference>
<dbReference type="PIRSF" id="PIRSF001619">
    <property type="entry name" value="Biotin_synth"/>
    <property type="match status" value="1"/>
</dbReference>
<dbReference type="SFLD" id="SFLDF00272">
    <property type="entry name" value="biotin_synthase"/>
    <property type="match status" value="1"/>
</dbReference>
<dbReference type="SFLD" id="SFLDS00029">
    <property type="entry name" value="Radical_SAM"/>
    <property type="match status" value="1"/>
</dbReference>
<dbReference type="SMART" id="SM00876">
    <property type="entry name" value="BATS"/>
    <property type="match status" value="1"/>
</dbReference>
<dbReference type="SMART" id="SM00729">
    <property type="entry name" value="Elp3"/>
    <property type="match status" value="1"/>
</dbReference>
<dbReference type="SUPFAM" id="SSF102114">
    <property type="entry name" value="Radical SAM enzymes"/>
    <property type="match status" value="1"/>
</dbReference>
<dbReference type="PROSITE" id="PS51918">
    <property type="entry name" value="RADICAL_SAM"/>
    <property type="match status" value="1"/>
</dbReference>
<accession>B0TJN8</accession>
<keyword id="KW-0001">2Fe-2S</keyword>
<keyword id="KW-0004">4Fe-4S</keyword>
<keyword id="KW-0093">Biotin biosynthesis</keyword>
<keyword id="KW-0408">Iron</keyword>
<keyword id="KW-0411">Iron-sulfur</keyword>
<keyword id="KW-0479">Metal-binding</keyword>
<keyword id="KW-0949">S-adenosyl-L-methionine</keyword>
<keyword id="KW-0808">Transferase</keyword>
<proteinExistence type="inferred from homology"/>
<evidence type="ECO:0000255" key="1">
    <source>
        <dbReference type="HAMAP-Rule" id="MF_01694"/>
    </source>
</evidence>
<evidence type="ECO:0000255" key="2">
    <source>
        <dbReference type="PROSITE-ProRule" id="PRU01266"/>
    </source>
</evidence>
<feature type="chain" id="PRO_0000381619" description="Biotin synthase">
    <location>
        <begin position="1"/>
        <end position="350"/>
    </location>
</feature>
<feature type="domain" description="Radical SAM core" evidence="2">
    <location>
        <begin position="41"/>
        <end position="268"/>
    </location>
</feature>
<feature type="binding site" evidence="1">
    <location>
        <position position="56"/>
    </location>
    <ligand>
        <name>[4Fe-4S] cluster</name>
        <dbReference type="ChEBI" id="CHEBI:49883"/>
        <note>4Fe-4S-S-AdoMet</note>
    </ligand>
</feature>
<feature type="binding site" evidence="1">
    <location>
        <position position="60"/>
    </location>
    <ligand>
        <name>[4Fe-4S] cluster</name>
        <dbReference type="ChEBI" id="CHEBI:49883"/>
        <note>4Fe-4S-S-AdoMet</note>
    </ligand>
</feature>
<feature type="binding site" evidence="1">
    <location>
        <position position="63"/>
    </location>
    <ligand>
        <name>[4Fe-4S] cluster</name>
        <dbReference type="ChEBI" id="CHEBI:49883"/>
        <note>4Fe-4S-S-AdoMet</note>
    </ligand>
</feature>
<feature type="binding site" evidence="1">
    <location>
        <position position="100"/>
    </location>
    <ligand>
        <name>[2Fe-2S] cluster</name>
        <dbReference type="ChEBI" id="CHEBI:190135"/>
    </ligand>
</feature>
<feature type="binding site" evidence="1">
    <location>
        <position position="131"/>
    </location>
    <ligand>
        <name>[2Fe-2S] cluster</name>
        <dbReference type="ChEBI" id="CHEBI:190135"/>
    </ligand>
</feature>
<feature type="binding site" evidence="1">
    <location>
        <position position="191"/>
    </location>
    <ligand>
        <name>[2Fe-2S] cluster</name>
        <dbReference type="ChEBI" id="CHEBI:190135"/>
    </ligand>
</feature>
<feature type="binding site" evidence="1">
    <location>
        <position position="263"/>
    </location>
    <ligand>
        <name>[2Fe-2S] cluster</name>
        <dbReference type="ChEBI" id="CHEBI:190135"/>
    </ligand>
</feature>
<name>BIOB_SHEHH</name>
<sequence length="350" mass="38875">MSEVQLRNNWKREEIESLFALPMNDLLFQAHSIHRQEFDPNEVQISRLLSIKTGACPEDCKYCPQSARYDTGLEKERLLAMETVLTEARSAKAAGASRFCMGAAWRNPKERDMPYLKTMVEEVKALGMETCMTLGMLSAEQANTLADAGLDYYNHNLDTSPEYYGDVITTRTYQSRLDTLSNVRASGMKVCSGGIVGMGEKATDRAGLIQQLANLDQHPDSVPINMLVKVEGTPFEKLDDLDPLEFVRTIAVARITMPKSRVRLSAGRENMSDELQAMCFFAGANSIFYGCKLLTTPNPEENDDMGLFRRLGLHPEQGVASTKEQDEAMLAKAAAQQDKKVSAFYDAGAL</sequence>
<reference key="1">
    <citation type="submission" date="2008-01" db="EMBL/GenBank/DDBJ databases">
        <title>Complete sequence of Shewanella halifaxensis HAW-EB4.</title>
        <authorList>
            <consortium name="US DOE Joint Genome Institute"/>
            <person name="Copeland A."/>
            <person name="Lucas S."/>
            <person name="Lapidus A."/>
            <person name="Glavina del Rio T."/>
            <person name="Dalin E."/>
            <person name="Tice H."/>
            <person name="Bruce D."/>
            <person name="Goodwin L."/>
            <person name="Pitluck S."/>
            <person name="Sims D."/>
            <person name="Brettin T."/>
            <person name="Detter J.C."/>
            <person name="Han C."/>
            <person name="Kuske C.R."/>
            <person name="Schmutz J."/>
            <person name="Larimer F."/>
            <person name="Land M."/>
            <person name="Hauser L."/>
            <person name="Kyrpides N."/>
            <person name="Kim E."/>
            <person name="Zhao J.-S."/>
            <person name="Richardson P."/>
        </authorList>
    </citation>
    <scope>NUCLEOTIDE SEQUENCE [LARGE SCALE GENOMIC DNA]</scope>
    <source>
        <strain>HAW-EB4</strain>
    </source>
</reference>
<comment type="function">
    <text evidence="1">Catalyzes the conversion of dethiobiotin (DTB) to biotin by the insertion of a sulfur atom into dethiobiotin via a radical-based mechanism.</text>
</comment>
<comment type="catalytic activity">
    <reaction evidence="1">
        <text>(4R,5S)-dethiobiotin + (sulfur carrier)-SH + 2 reduced [2Fe-2S]-[ferredoxin] + 2 S-adenosyl-L-methionine = (sulfur carrier)-H + biotin + 2 5'-deoxyadenosine + 2 L-methionine + 2 oxidized [2Fe-2S]-[ferredoxin]</text>
        <dbReference type="Rhea" id="RHEA:22060"/>
        <dbReference type="Rhea" id="RHEA-COMP:10000"/>
        <dbReference type="Rhea" id="RHEA-COMP:10001"/>
        <dbReference type="Rhea" id="RHEA-COMP:14737"/>
        <dbReference type="Rhea" id="RHEA-COMP:14739"/>
        <dbReference type="ChEBI" id="CHEBI:17319"/>
        <dbReference type="ChEBI" id="CHEBI:29917"/>
        <dbReference type="ChEBI" id="CHEBI:33737"/>
        <dbReference type="ChEBI" id="CHEBI:33738"/>
        <dbReference type="ChEBI" id="CHEBI:57586"/>
        <dbReference type="ChEBI" id="CHEBI:57844"/>
        <dbReference type="ChEBI" id="CHEBI:59789"/>
        <dbReference type="ChEBI" id="CHEBI:64428"/>
        <dbReference type="ChEBI" id="CHEBI:149473"/>
        <dbReference type="EC" id="2.8.1.6"/>
    </reaction>
</comment>
<comment type="cofactor">
    <cofactor evidence="1">
        <name>[4Fe-4S] cluster</name>
        <dbReference type="ChEBI" id="CHEBI:49883"/>
    </cofactor>
    <text evidence="1">Binds 1 [4Fe-4S] cluster. The cluster is coordinated with 3 cysteines and an exchangeable S-adenosyl-L-methionine.</text>
</comment>
<comment type="cofactor">
    <cofactor evidence="1">
        <name>[2Fe-2S] cluster</name>
        <dbReference type="ChEBI" id="CHEBI:190135"/>
    </cofactor>
    <text evidence="1">Binds 1 [2Fe-2S] cluster. The cluster is coordinated with 3 cysteines and 1 arginine.</text>
</comment>
<comment type="pathway">
    <text evidence="1">Cofactor biosynthesis; biotin biosynthesis; biotin from 7,8-diaminononanoate: step 2/2.</text>
</comment>
<comment type="subunit">
    <text evidence="1">Homodimer.</text>
</comment>
<comment type="similarity">
    <text evidence="1">Belongs to the radical SAM superfamily. Biotin synthase family.</text>
</comment>
<protein>
    <recommendedName>
        <fullName evidence="1">Biotin synthase</fullName>
        <ecNumber evidence="1">2.8.1.6</ecNumber>
    </recommendedName>
</protein>
<organism>
    <name type="scientific">Shewanella halifaxensis (strain HAW-EB4)</name>
    <dbReference type="NCBI Taxonomy" id="458817"/>
    <lineage>
        <taxon>Bacteria</taxon>
        <taxon>Pseudomonadati</taxon>
        <taxon>Pseudomonadota</taxon>
        <taxon>Gammaproteobacteria</taxon>
        <taxon>Alteromonadales</taxon>
        <taxon>Shewanellaceae</taxon>
        <taxon>Shewanella</taxon>
    </lineage>
</organism>
<gene>
    <name evidence="1" type="primary">bioB</name>
    <name type="ordered locus">Shal_2477</name>
</gene>